<keyword id="KW-1003">Cell membrane</keyword>
<keyword id="KW-0963">Cytoplasm</keyword>
<keyword id="KW-0449">Lipoprotein</keyword>
<keyword id="KW-0472">Membrane</keyword>
<keyword id="KW-1210">Necrosis</keyword>
<keyword id="KW-0564">Palmitate</keyword>
<keyword id="KW-1185">Reference proteome</keyword>
<keyword id="KW-0812">Transmembrane</keyword>
<keyword id="KW-1134">Transmembrane beta strand</keyword>
<name>GSDMA_MOUSE</name>
<dbReference type="EMBL" id="AB033595">
    <property type="protein sequence ID" value="BAB13697.1"/>
    <property type="molecule type" value="mRNA"/>
</dbReference>
<dbReference type="EMBL" id="AK028645">
    <property type="protein sequence ID" value="BAC26045.1"/>
    <property type="molecule type" value="mRNA"/>
</dbReference>
<dbReference type="EMBL" id="AK028698">
    <property type="protein sequence ID" value="BAC26073.1"/>
    <property type="molecule type" value="mRNA"/>
</dbReference>
<dbReference type="EMBL" id="AK029062">
    <property type="protein sequence ID" value="BAC26272.1"/>
    <property type="molecule type" value="mRNA"/>
</dbReference>
<dbReference type="EMBL" id="AL590963">
    <property type="status" value="NOT_ANNOTATED_CDS"/>
    <property type="molecule type" value="Genomic_DNA"/>
</dbReference>
<dbReference type="CCDS" id="CCDS25358.1"/>
<dbReference type="RefSeq" id="NP_067322.1">
    <property type="nucleotide sequence ID" value="NM_021347.4"/>
</dbReference>
<dbReference type="SMR" id="Q9EST1"/>
<dbReference type="BioGRID" id="208361">
    <property type="interactions" value="1"/>
</dbReference>
<dbReference type="FunCoup" id="Q9EST1">
    <property type="interactions" value="148"/>
</dbReference>
<dbReference type="IntAct" id="Q9EST1">
    <property type="interactions" value="1"/>
</dbReference>
<dbReference type="MINT" id="Q9EST1"/>
<dbReference type="STRING" id="10090.ENSMUSP00000017348"/>
<dbReference type="iPTMnet" id="Q9EST1"/>
<dbReference type="PhosphoSitePlus" id="Q9EST1"/>
<dbReference type="SwissPalm" id="Q9EST1"/>
<dbReference type="PaxDb" id="10090-ENSMUSP00000017348"/>
<dbReference type="ProteomicsDB" id="271467"/>
<dbReference type="DNASU" id="57911"/>
<dbReference type="Ensembl" id="ENSMUST00000017348.3">
    <property type="protein sequence ID" value="ENSMUSP00000017348.3"/>
    <property type="gene ID" value="ENSMUSG00000017204.5"/>
</dbReference>
<dbReference type="GeneID" id="57911"/>
<dbReference type="KEGG" id="mmu:57911"/>
<dbReference type="UCSC" id="uc007lgv.1">
    <property type="organism name" value="mouse"/>
</dbReference>
<dbReference type="AGR" id="MGI:1889509"/>
<dbReference type="CTD" id="284110"/>
<dbReference type="MGI" id="MGI:1889509">
    <property type="gene designation" value="Gsdma"/>
</dbReference>
<dbReference type="VEuPathDB" id="HostDB:ENSMUSG00000017204"/>
<dbReference type="eggNOG" id="ENOG502S0IQ">
    <property type="taxonomic scope" value="Eukaryota"/>
</dbReference>
<dbReference type="GeneTree" id="ENSGT00950000183140"/>
<dbReference type="HOGENOM" id="CLU_040752_0_0_1"/>
<dbReference type="InParanoid" id="Q9EST1"/>
<dbReference type="OMA" id="HICNDSM"/>
<dbReference type="OrthoDB" id="9944616at2759"/>
<dbReference type="PhylomeDB" id="Q9EST1"/>
<dbReference type="TreeFam" id="TF331886"/>
<dbReference type="BioGRID-ORCS" id="57911">
    <property type="hits" value="2 hits in 78 CRISPR screens"/>
</dbReference>
<dbReference type="ChiTaRS" id="Gsdma">
    <property type="organism name" value="mouse"/>
</dbReference>
<dbReference type="PRO" id="PR:Q9EST1"/>
<dbReference type="Proteomes" id="UP000000589">
    <property type="component" value="Chromosome 11"/>
</dbReference>
<dbReference type="RNAct" id="Q9EST1">
    <property type="molecule type" value="protein"/>
</dbReference>
<dbReference type="Bgee" id="ENSMUSG00000017204">
    <property type="expression patterns" value="Expressed in esophagus and 46 other cell types or tissues"/>
</dbReference>
<dbReference type="GO" id="GO:0005737">
    <property type="term" value="C:cytoplasm"/>
    <property type="evidence" value="ECO:0000314"/>
    <property type="project" value="MGI"/>
</dbReference>
<dbReference type="GO" id="GO:0005829">
    <property type="term" value="C:cytosol"/>
    <property type="evidence" value="ECO:0007669"/>
    <property type="project" value="UniProtKB-SubCell"/>
</dbReference>
<dbReference type="GO" id="GO:0048471">
    <property type="term" value="C:perinuclear region of cytoplasm"/>
    <property type="evidence" value="ECO:0000250"/>
    <property type="project" value="UniProtKB"/>
</dbReference>
<dbReference type="GO" id="GO:0005886">
    <property type="term" value="C:plasma membrane"/>
    <property type="evidence" value="ECO:0007669"/>
    <property type="project" value="UniProtKB-SubCell"/>
</dbReference>
<dbReference type="GO" id="GO:0012501">
    <property type="term" value="P:programmed cell death"/>
    <property type="evidence" value="ECO:0007669"/>
    <property type="project" value="UniProtKB-KW"/>
</dbReference>
<dbReference type="InterPro" id="IPR007677">
    <property type="entry name" value="Gasdermin"/>
</dbReference>
<dbReference type="InterPro" id="IPR040460">
    <property type="entry name" value="Gasdermin_pore"/>
</dbReference>
<dbReference type="InterPro" id="IPR041263">
    <property type="entry name" value="Gasdermin_PUB"/>
</dbReference>
<dbReference type="PANTHER" id="PTHR16399">
    <property type="entry name" value="GASDERMIN"/>
    <property type="match status" value="1"/>
</dbReference>
<dbReference type="PANTHER" id="PTHR16399:SF18">
    <property type="entry name" value="GASDERMIN-A"/>
    <property type="match status" value="1"/>
</dbReference>
<dbReference type="Pfam" id="PF04598">
    <property type="entry name" value="Gasdermin"/>
    <property type="match status" value="1"/>
</dbReference>
<dbReference type="Pfam" id="PF17708">
    <property type="entry name" value="Gasdermin_C"/>
    <property type="match status" value="1"/>
</dbReference>
<organism>
    <name type="scientific">Mus musculus</name>
    <name type="common">Mouse</name>
    <dbReference type="NCBI Taxonomy" id="10090"/>
    <lineage>
        <taxon>Eukaryota</taxon>
        <taxon>Metazoa</taxon>
        <taxon>Chordata</taxon>
        <taxon>Craniata</taxon>
        <taxon>Vertebrata</taxon>
        <taxon>Euteleostomi</taxon>
        <taxon>Mammalia</taxon>
        <taxon>Eutheria</taxon>
        <taxon>Euarchontoglires</taxon>
        <taxon>Glires</taxon>
        <taxon>Rodentia</taxon>
        <taxon>Myomorpha</taxon>
        <taxon>Muroidea</taxon>
        <taxon>Muridae</taxon>
        <taxon>Murinae</taxon>
        <taxon>Mus</taxon>
        <taxon>Mus</taxon>
    </lineage>
</organism>
<comment type="function">
    <molecule>Gasdermin-A</molecule>
    <text evidence="5">This form constitutes the precursor of the pore-forming protein and acts as a sensor of bacterial infection: upon infection, specifically cleaved by bacterial effector protein SpeB in epithelial cells, releasing the N-terminal moiety (Gasdermin-A, N-terminal) that binds to membranes and forms pores, triggering pyroptosis.</text>
</comment>
<comment type="function">
    <molecule>Gasdermin-A, N-terminal</molecule>
    <text evidence="2 5 6">Pore-forming protein that causes membrane permeabilization and pyroptosis (PubMed:35110732). Released upon cleavage by bacterial effector protein SpeB, and binds to membrane inner leaflet lipids (PubMed:35110732). Homooligomerizes within the membrane and forms pores of 10-15 nanometers (nm) of inner diameter, triggering pyroptosis (By similarity). Pyroptosis triggers the elimination of the infected skin cell, depriving the pathogen of its protective niche, while inducing an inflammatory response (PubMed:35110732, PubMed:35545676). This ultimately prevents bacterial penetration of the epithelial barrier and a subsequent systemic dissemination of the pathogen (PubMed:35110732, PubMed:35545676). Binds to cardiolipin and other acidic phospholipids, such as phosphatidylserine, which mediate its targeting to the inner leaflet membrane (By similarity).</text>
</comment>
<comment type="activity regulation">
    <molecule>Gasdermin-A</molecule>
    <text evidence="1 5">The full-length protein before cleavage is inactive: intramolecular interactions between N- and C-terminal domains mediate autoinhibition in the absence of activation signal (By similarity). The intrinsic pyroptosis-inducing activity is carried by the released N-terminal moiety (Gasdermin-A, N-terminal) following cleavage by bacterial effector protein SpeB (PubMed:35110732).</text>
</comment>
<comment type="subunit">
    <molecule>Gasdermin-A, N-terminal</molecule>
    <text evidence="1">Homooligomer; homooligomeric ring-shaped pore complex containing 18-36 subunits when inserted in the membrane.</text>
</comment>
<comment type="subcellular location">
    <molecule>Gasdermin-A</molecule>
    <subcellularLocation>
        <location evidence="2">Cytoplasm</location>
        <location evidence="2">Perinuclear region</location>
    </subcellularLocation>
    <subcellularLocation>
        <location evidence="1">Cytoplasm</location>
        <location evidence="1">Cytosol</location>
    </subcellularLocation>
</comment>
<comment type="subcellular location">
    <molecule>Gasdermin-A, N-terminal</molecule>
    <subcellularLocation>
        <location evidence="1">Cell membrane</location>
        <topology evidence="1">Multi-pass membrane protein</topology>
    </subcellularLocation>
</comment>
<comment type="tissue specificity">
    <text evidence="3 4">Expressed predominantly in the gastrointestinal (GI) tract and in the skin at a lower level. In the GI tract, the expression is highly restricted to the esophagus and forestomach.</text>
</comment>
<comment type="developmental stage">
    <text evidence="4">Expression is first detected at 12.5 dpc.</text>
</comment>
<comment type="domain">
    <text evidence="1">Intramolecular interactions between N- and C-terminal domains are important for autoinhibition in the absence of activation signal. The intrinsic pyroptosis-inducing activity is carried by the N-terminal domain.</text>
</comment>
<comment type="PTM">
    <text evidence="5">Cleavage by bacterial SpeB relieves autoinhibition by releasing the N-terminal moiety (Gasdermin-A, N-terminal) that initiates pyroptosis.</text>
</comment>
<comment type="PTM">
    <text evidence="2">Palmitoylated.</text>
</comment>
<comment type="disruption phenotype">
    <text evidence="5 6">Mice are highly susceptible to subcutaneous group A Streptococcus (GAS) infection in an animal model (PubMed:35110732). Mice lacking Gsdma, Gsdma2 and Gsdma3 are highly susceptible to subcutaneous group A Streptococcus (GAS) infection in an animal model (PubMed:35545676).</text>
</comment>
<comment type="similarity">
    <text evidence="8">Belongs to the gasdermin family.</text>
</comment>
<protein>
    <recommendedName>
        <fullName>Gasdermin-A</fullName>
    </recommendedName>
    <alternativeName>
        <fullName>Gasdermin-1</fullName>
    </alternativeName>
    <alternativeName>
        <fullName>Gasdermin-A1</fullName>
    </alternativeName>
    <component>
        <recommendedName>
            <fullName evidence="8">Gasdermin-A, N-terminal</fullName>
            <shortName evidence="8">GSDMA-NT</shortName>
        </recommendedName>
    </component>
    <component>
        <recommendedName>
            <fullName evidence="8">Gasdermin-A, C-terminal</fullName>
            <shortName evidence="8">GSDMA-CT</shortName>
        </recommendedName>
    </component>
</protein>
<accession>Q9EST1</accession>
<accession>A3KFN3</accession>
<feature type="chain" id="PRO_0000148174" description="Gasdermin-A">
    <location>
        <begin position="1"/>
        <end position="446"/>
    </location>
</feature>
<feature type="chain" id="PRO_0000451666" description="Gasdermin-A, N-terminal" evidence="9">
    <location>
        <begin position="1"/>
        <end position="247"/>
    </location>
</feature>
<feature type="chain" id="PRO_0000451667" description="Gasdermin-A, C-terminal" evidence="9">
    <location>
        <begin position="248"/>
        <end position="446"/>
    </location>
</feature>
<feature type="transmembrane region" description="Beta stranded" evidence="1">
    <location>
        <begin position="78"/>
        <end position="95"/>
    </location>
</feature>
<feature type="transmembrane region" description="Beta stranded" evidence="1">
    <location>
        <begin position="99"/>
        <end position="120"/>
    </location>
</feature>
<feature type="transmembrane region" description="Beta stranded" evidence="1">
    <location>
        <begin position="164"/>
        <end position="180"/>
    </location>
</feature>
<feature type="transmembrane region" description="Beta stranded" evidence="1">
    <location>
        <begin position="184"/>
        <end position="198"/>
    </location>
</feature>
<feature type="region of interest" description="Triggers pyroptosis" evidence="2">
    <location>
        <begin position="1"/>
        <end position="252"/>
    </location>
</feature>
<feature type="binding site" evidence="1">
    <location>
        <begin position="9"/>
        <end position="13"/>
    </location>
    <ligand>
        <name>a cardiolipin</name>
        <dbReference type="ChEBI" id="CHEBI:62237"/>
    </ligand>
</feature>
<feature type="site" description="(Microbial infection) Cleavage; by bacterial effector protein SpeB" evidence="5">
    <location>
        <begin position="247"/>
        <end position="248"/>
    </location>
</feature>
<feature type="mutagenesis site" description="Abolished cleavage by bacterial effector protein SpeB, preventing pyroptosis." evidence="5">
    <original>QA</original>
    <variation>NE</variation>
    <location>
        <begin position="247"/>
        <end position="248"/>
    </location>
</feature>
<evidence type="ECO:0000250" key="1">
    <source>
        <dbReference type="UniProtKB" id="Q5Y4Y6"/>
    </source>
</evidence>
<evidence type="ECO:0000250" key="2">
    <source>
        <dbReference type="UniProtKB" id="Q96QA5"/>
    </source>
</evidence>
<evidence type="ECO:0000269" key="3">
    <source>
    </source>
</evidence>
<evidence type="ECO:0000269" key="4">
    <source>
    </source>
</evidence>
<evidence type="ECO:0000269" key="5">
    <source>
    </source>
</evidence>
<evidence type="ECO:0000269" key="6">
    <source>
    </source>
</evidence>
<evidence type="ECO:0000303" key="7">
    <source>
    </source>
</evidence>
<evidence type="ECO:0000305" key="8"/>
<evidence type="ECO:0000305" key="9">
    <source>
    </source>
</evidence>
<gene>
    <name type="primary">Gsdma</name>
    <name evidence="7" type="synonym">Gsdm</name>
    <name type="synonym">Gsdm1</name>
    <name type="synonym">Gsdma1</name>
</gene>
<proteinExistence type="evidence at protein level"/>
<sequence length="446" mass="49593">MTMFENVTRALARQLNPRGDLTPLDSLIDFKRFHPFCLVLRKRKSTLFWGARYVHTDYTLLDVLEPGSSPSDPTDSGNFSFKNMLDARVEGDVDVPKTVKVKGTAGLSRSSTLEVQTLSVAPTALENLHKERKLSADHPFLKEMRERGENLYVVMEVVETLQEVTLERAGKAEGCFSLPFFAPLGLQGSVNHKEAVTIPKGCVLAYRVRQLMVNGKDEWGIPHICNDSMQTFPPGEKPGEGKFILIQASDVGEMHEDFKTLKEEVQRETQEVEKLSPVGRSSLLTSLSHLLGKKKELQDLEQTLEGALDKGHEVTLEALPKDVLLSKDAMDAILYFLGALTVLSEAQQKLLVKSLEKKILPVQLKLVESTMEKNFLQDKEGVFPLQPDLLSSLGEEELILTEALVGLSGLEVQRSGPQYTWDPDTLPHLCALYAGLSLLQLLSKNS</sequence>
<reference key="1">
    <citation type="journal article" date="2000" name="Mamm. Genome">
        <title>Gasdermin (Gsdm) localizing to mouse chromosome 11 is predominantly expressed in upper gastrointestinal tract but significantly suppressed in human gastric cancer cells.</title>
        <authorList>
            <person name="Saeki N."/>
            <person name="Kuwahara Y."/>
            <person name="Sasaki H."/>
            <person name="Satoh H."/>
            <person name="Shiroishi T."/>
        </authorList>
    </citation>
    <scope>NUCLEOTIDE SEQUENCE [MRNA]</scope>
    <scope>SUBCELLULAR LOCATION</scope>
    <scope>TISSUE SPECIFICITY</scope>
    <source>
        <strain>C57BL/10J</strain>
        <tissue>Skin</tissue>
    </source>
</reference>
<reference key="2">
    <citation type="journal article" date="2005" name="Science">
        <title>The transcriptional landscape of the mammalian genome.</title>
        <authorList>
            <person name="Carninci P."/>
            <person name="Kasukawa T."/>
            <person name="Katayama S."/>
            <person name="Gough J."/>
            <person name="Frith M.C."/>
            <person name="Maeda N."/>
            <person name="Oyama R."/>
            <person name="Ravasi T."/>
            <person name="Lenhard B."/>
            <person name="Wells C."/>
            <person name="Kodzius R."/>
            <person name="Shimokawa K."/>
            <person name="Bajic V.B."/>
            <person name="Brenner S.E."/>
            <person name="Batalov S."/>
            <person name="Forrest A.R."/>
            <person name="Zavolan M."/>
            <person name="Davis M.J."/>
            <person name="Wilming L.G."/>
            <person name="Aidinis V."/>
            <person name="Allen J.E."/>
            <person name="Ambesi-Impiombato A."/>
            <person name="Apweiler R."/>
            <person name="Aturaliya R.N."/>
            <person name="Bailey T.L."/>
            <person name="Bansal M."/>
            <person name="Baxter L."/>
            <person name="Beisel K.W."/>
            <person name="Bersano T."/>
            <person name="Bono H."/>
            <person name="Chalk A.M."/>
            <person name="Chiu K.P."/>
            <person name="Choudhary V."/>
            <person name="Christoffels A."/>
            <person name="Clutterbuck D.R."/>
            <person name="Crowe M.L."/>
            <person name="Dalla E."/>
            <person name="Dalrymple B.P."/>
            <person name="de Bono B."/>
            <person name="Della Gatta G."/>
            <person name="di Bernardo D."/>
            <person name="Down T."/>
            <person name="Engstrom P."/>
            <person name="Fagiolini M."/>
            <person name="Faulkner G."/>
            <person name="Fletcher C.F."/>
            <person name="Fukushima T."/>
            <person name="Furuno M."/>
            <person name="Futaki S."/>
            <person name="Gariboldi M."/>
            <person name="Georgii-Hemming P."/>
            <person name="Gingeras T.R."/>
            <person name="Gojobori T."/>
            <person name="Green R.E."/>
            <person name="Gustincich S."/>
            <person name="Harbers M."/>
            <person name="Hayashi Y."/>
            <person name="Hensch T.K."/>
            <person name="Hirokawa N."/>
            <person name="Hill D."/>
            <person name="Huminiecki L."/>
            <person name="Iacono M."/>
            <person name="Ikeo K."/>
            <person name="Iwama A."/>
            <person name="Ishikawa T."/>
            <person name="Jakt M."/>
            <person name="Kanapin A."/>
            <person name="Katoh M."/>
            <person name="Kawasawa Y."/>
            <person name="Kelso J."/>
            <person name="Kitamura H."/>
            <person name="Kitano H."/>
            <person name="Kollias G."/>
            <person name="Krishnan S.P."/>
            <person name="Kruger A."/>
            <person name="Kummerfeld S.K."/>
            <person name="Kurochkin I.V."/>
            <person name="Lareau L.F."/>
            <person name="Lazarevic D."/>
            <person name="Lipovich L."/>
            <person name="Liu J."/>
            <person name="Liuni S."/>
            <person name="McWilliam S."/>
            <person name="Madan Babu M."/>
            <person name="Madera M."/>
            <person name="Marchionni L."/>
            <person name="Matsuda H."/>
            <person name="Matsuzawa S."/>
            <person name="Miki H."/>
            <person name="Mignone F."/>
            <person name="Miyake S."/>
            <person name="Morris K."/>
            <person name="Mottagui-Tabar S."/>
            <person name="Mulder N."/>
            <person name="Nakano N."/>
            <person name="Nakauchi H."/>
            <person name="Ng P."/>
            <person name="Nilsson R."/>
            <person name="Nishiguchi S."/>
            <person name="Nishikawa S."/>
            <person name="Nori F."/>
            <person name="Ohara O."/>
            <person name="Okazaki Y."/>
            <person name="Orlando V."/>
            <person name="Pang K.C."/>
            <person name="Pavan W.J."/>
            <person name="Pavesi G."/>
            <person name="Pesole G."/>
            <person name="Petrovsky N."/>
            <person name="Piazza S."/>
            <person name="Reed J."/>
            <person name="Reid J.F."/>
            <person name="Ring B.Z."/>
            <person name="Ringwald M."/>
            <person name="Rost B."/>
            <person name="Ruan Y."/>
            <person name="Salzberg S.L."/>
            <person name="Sandelin A."/>
            <person name="Schneider C."/>
            <person name="Schoenbach C."/>
            <person name="Sekiguchi K."/>
            <person name="Semple C.A."/>
            <person name="Seno S."/>
            <person name="Sessa L."/>
            <person name="Sheng Y."/>
            <person name="Shibata Y."/>
            <person name="Shimada H."/>
            <person name="Shimada K."/>
            <person name="Silva D."/>
            <person name="Sinclair B."/>
            <person name="Sperling S."/>
            <person name="Stupka E."/>
            <person name="Sugiura K."/>
            <person name="Sultana R."/>
            <person name="Takenaka Y."/>
            <person name="Taki K."/>
            <person name="Tammoja K."/>
            <person name="Tan S.L."/>
            <person name="Tang S."/>
            <person name="Taylor M.S."/>
            <person name="Tegner J."/>
            <person name="Teichmann S.A."/>
            <person name="Ueda H.R."/>
            <person name="van Nimwegen E."/>
            <person name="Verardo R."/>
            <person name="Wei C.L."/>
            <person name="Yagi K."/>
            <person name="Yamanishi H."/>
            <person name="Zabarovsky E."/>
            <person name="Zhu S."/>
            <person name="Zimmer A."/>
            <person name="Hide W."/>
            <person name="Bult C."/>
            <person name="Grimmond S.M."/>
            <person name="Teasdale R.D."/>
            <person name="Liu E.T."/>
            <person name="Brusic V."/>
            <person name="Quackenbush J."/>
            <person name="Wahlestedt C."/>
            <person name="Mattick J.S."/>
            <person name="Hume D.A."/>
            <person name="Kai C."/>
            <person name="Sasaki D."/>
            <person name="Tomaru Y."/>
            <person name="Fukuda S."/>
            <person name="Kanamori-Katayama M."/>
            <person name="Suzuki M."/>
            <person name="Aoki J."/>
            <person name="Arakawa T."/>
            <person name="Iida J."/>
            <person name="Imamura K."/>
            <person name="Itoh M."/>
            <person name="Kato T."/>
            <person name="Kawaji H."/>
            <person name="Kawagashira N."/>
            <person name="Kawashima T."/>
            <person name="Kojima M."/>
            <person name="Kondo S."/>
            <person name="Konno H."/>
            <person name="Nakano K."/>
            <person name="Ninomiya N."/>
            <person name="Nishio T."/>
            <person name="Okada M."/>
            <person name="Plessy C."/>
            <person name="Shibata K."/>
            <person name="Shiraki T."/>
            <person name="Suzuki S."/>
            <person name="Tagami M."/>
            <person name="Waki K."/>
            <person name="Watahiki A."/>
            <person name="Okamura-Oho Y."/>
            <person name="Suzuki H."/>
            <person name="Kawai J."/>
            <person name="Hayashizaki Y."/>
        </authorList>
    </citation>
    <scope>NUCLEOTIDE SEQUENCE [LARGE SCALE MRNA]</scope>
    <source>
        <strain>C57BL/6J</strain>
        <tissue>Skin</tissue>
    </source>
</reference>
<reference key="3">
    <citation type="journal article" date="2009" name="PLoS Biol.">
        <title>Lineage-specific biology revealed by a finished genome assembly of the mouse.</title>
        <authorList>
            <person name="Church D.M."/>
            <person name="Goodstadt L."/>
            <person name="Hillier L.W."/>
            <person name="Zody M.C."/>
            <person name="Goldstein S."/>
            <person name="She X."/>
            <person name="Bult C.J."/>
            <person name="Agarwala R."/>
            <person name="Cherry J.L."/>
            <person name="DiCuccio M."/>
            <person name="Hlavina W."/>
            <person name="Kapustin Y."/>
            <person name="Meric P."/>
            <person name="Maglott D."/>
            <person name="Birtle Z."/>
            <person name="Marques A.C."/>
            <person name="Graves T."/>
            <person name="Zhou S."/>
            <person name="Teague B."/>
            <person name="Potamousis K."/>
            <person name="Churas C."/>
            <person name="Place M."/>
            <person name="Herschleb J."/>
            <person name="Runnheim R."/>
            <person name="Forrest D."/>
            <person name="Amos-Landgraf J."/>
            <person name="Schwartz D.C."/>
            <person name="Cheng Z."/>
            <person name="Lindblad-Toh K."/>
            <person name="Eichler E.E."/>
            <person name="Ponting C.P."/>
        </authorList>
    </citation>
    <scope>NUCLEOTIDE SEQUENCE [LARGE SCALE GENOMIC DNA]</scope>
    <source>
        <strain>C57BL/6J</strain>
    </source>
</reference>
<reference key="4">
    <citation type="journal article" date="2007" name="Genomics">
        <title>Members of a novel gene family, Gsdm, are expressed exclusively in the epithelium of the skin and gastrointestinal tract in a highly tissue-specific manner.</title>
        <authorList>
            <person name="Tamura M."/>
            <person name="Tanaka S."/>
            <person name="Fujii T."/>
            <person name="Aoki A."/>
            <person name="Komiyama H."/>
            <person name="Ezawa K."/>
            <person name="Sumiyama K."/>
            <person name="Sagai T."/>
            <person name="Shiroishi T."/>
        </authorList>
    </citation>
    <scope>TISSUE SPECIFICITY</scope>
    <scope>DEVELOPMENTAL STAGE</scope>
</reference>
<reference key="5">
    <citation type="journal article" date="2022" name="Nature">
        <title>Streptococcal pyrogenic exotoxin B cleaves GSDMA and triggers pyroptosis.</title>
        <authorList>
            <person name="Deng W."/>
            <person name="Bai Y."/>
            <person name="Deng F."/>
            <person name="Pan Y."/>
            <person name="Mei S."/>
            <person name="Zheng Z."/>
            <person name="Min R."/>
            <person name="Wu Z."/>
            <person name="Li W."/>
            <person name="Miao R."/>
            <person name="Zhang Z."/>
            <person name="Kupper T.S."/>
            <person name="Lieberman J."/>
            <person name="Liu X."/>
        </authorList>
    </citation>
    <scope>FUNCTION</scope>
    <scope>ACTIVITY REGULATION</scope>
    <scope>PROTEOLYTIC CLEAVAGE</scope>
    <scope>DISRUPTION PHENOTYPE</scope>
    <scope>MUTAGENESIS OF 247-GLN-ALA-248</scope>
</reference>
<reference key="6">
    <citation type="journal article" date="2022" name="Nature">
        <title>Group A Streptococcus induces GSDMA-dependent pyroptosis in keratinocytes.</title>
        <authorList>
            <person name="LaRock D.L."/>
            <person name="Johnson A.F."/>
            <person name="Wilde S."/>
            <person name="Sands J.S."/>
            <person name="Monteiro M.P."/>
            <person name="LaRock C.N."/>
        </authorList>
    </citation>
    <scope>FUNCTION</scope>
    <scope>DISRUPTION PHENOTYPE</scope>
</reference>